<keyword id="KW-0030">Aminoacyl-tRNA synthetase</keyword>
<keyword id="KW-0067">ATP-binding</keyword>
<keyword id="KW-0963">Cytoplasm</keyword>
<keyword id="KW-0436">Ligase</keyword>
<keyword id="KW-0547">Nucleotide-binding</keyword>
<keyword id="KW-0648">Protein biosynthesis</keyword>
<comment type="catalytic activity">
    <reaction evidence="1">
        <text>tRNA(Gly) + glycine + ATP = glycyl-tRNA(Gly) + AMP + diphosphate</text>
        <dbReference type="Rhea" id="RHEA:16013"/>
        <dbReference type="Rhea" id="RHEA-COMP:9664"/>
        <dbReference type="Rhea" id="RHEA-COMP:9683"/>
        <dbReference type="ChEBI" id="CHEBI:30616"/>
        <dbReference type="ChEBI" id="CHEBI:33019"/>
        <dbReference type="ChEBI" id="CHEBI:57305"/>
        <dbReference type="ChEBI" id="CHEBI:78442"/>
        <dbReference type="ChEBI" id="CHEBI:78522"/>
        <dbReference type="ChEBI" id="CHEBI:456215"/>
        <dbReference type="EC" id="6.1.1.14"/>
    </reaction>
</comment>
<comment type="subunit">
    <text evidence="1">Tetramer of two alpha and two beta subunits.</text>
</comment>
<comment type="subcellular location">
    <subcellularLocation>
        <location evidence="1">Cytoplasm</location>
    </subcellularLocation>
</comment>
<comment type="similarity">
    <text evidence="1">Belongs to the class-II aminoacyl-tRNA synthetase family.</text>
</comment>
<proteinExistence type="inferred from homology"/>
<reference key="1">
    <citation type="journal article" date="2004" name="Nat. Genet.">
        <title>Comparison of genome degradation in Paratyphi A and Typhi, human-restricted serovars of Salmonella enterica that cause typhoid.</title>
        <authorList>
            <person name="McClelland M."/>
            <person name="Sanderson K.E."/>
            <person name="Clifton S.W."/>
            <person name="Latreille P."/>
            <person name="Porwollik S."/>
            <person name="Sabo A."/>
            <person name="Meyer R."/>
            <person name="Bieri T."/>
            <person name="Ozersky P."/>
            <person name="McLellan M."/>
            <person name="Harkins C.R."/>
            <person name="Wang C."/>
            <person name="Nguyen C."/>
            <person name="Berghoff A."/>
            <person name="Elliott G."/>
            <person name="Kohlberg S."/>
            <person name="Strong C."/>
            <person name="Du F."/>
            <person name="Carter J."/>
            <person name="Kremizki C."/>
            <person name="Layman D."/>
            <person name="Leonard S."/>
            <person name="Sun H."/>
            <person name="Fulton L."/>
            <person name="Nash W."/>
            <person name="Miner T."/>
            <person name="Minx P."/>
            <person name="Delehaunty K."/>
            <person name="Fronick C."/>
            <person name="Magrini V."/>
            <person name="Nhan M."/>
            <person name="Warren W."/>
            <person name="Florea L."/>
            <person name="Spieth J."/>
            <person name="Wilson R.K."/>
        </authorList>
    </citation>
    <scope>NUCLEOTIDE SEQUENCE [LARGE SCALE GENOMIC DNA]</scope>
    <source>
        <strain>ATCC 9150 / SARB42</strain>
    </source>
</reference>
<accession>Q5PLN2</accession>
<evidence type="ECO:0000255" key="1">
    <source>
        <dbReference type="HAMAP-Rule" id="MF_00255"/>
    </source>
</evidence>
<sequence>MSEKTFLVEIGTEELPPKALRSLAESFAANFTAELDNAGLAHGNVEWFAAPRRLALKVANLAESQPDREVEKRGPAIAQAFDAEGKPSKAAEGWARGCGITVDQAERLKTDKGEWLLYRAHVKGESTEALVPNMVVTSLAKLPIPKLMRWGASDVHFVRPVHTVTLLLGDKVIPATILGIQSDRVIRGHRFMGEPEFTIDSAEQYPQILLERGKVIADYEARKAKIKADAEEAARKIGGNADLSESLLEEVASLVEWPVVLTAKFEEKFLAVPAEALVYTMKGDQKYFPVYDNAGKLLPNFIFVANIESKDPTQIISGNEKVVRPRLADAEFFFNTDRKKRLEDHLPRLQTVLFQQQLGTLRDKTDRIQALAGWIAGQIGADVNHATRAGLLSKCDLMTNMVFEFTDTQGVMGMHYARHDGEAEDVAVALNEQYQPRFAGDDLPSNPVACALAIADKMDTLAGIFGIGQHPKGDKDPFALRRAALGVLRIIVEKNLNLDLQTLTEEAARLYGDKLTNANVVDDVIDFMLGRFRAWYQDEGYTVDTIQAVLARRPTRPADFDARMKAVSHFRTLEEASALAAANKRVSNILAKATEPLNDIVHASVLKEAAEIELARHLVVLRDKLQPYFADGRYQEALIELAALRAPVDEFFENVMVNAEEKDIRINRLTLLSKLRELFLQVADISLLQ</sequence>
<feature type="chain" id="PRO_1000006398" description="Glycine--tRNA ligase beta subunit">
    <location>
        <begin position="1"/>
        <end position="689"/>
    </location>
</feature>
<protein>
    <recommendedName>
        <fullName evidence="1">Glycine--tRNA ligase beta subunit</fullName>
        <ecNumber evidence="1">6.1.1.14</ecNumber>
    </recommendedName>
    <alternativeName>
        <fullName evidence="1">Glycyl-tRNA synthetase beta subunit</fullName>
        <shortName evidence="1">GlyRS</shortName>
    </alternativeName>
</protein>
<dbReference type="EC" id="6.1.1.14" evidence="1"/>
<dbReference type="EMBL" id="CP000026">
    <property type="protein sequence ID" value="AAV79311.1"/>
    <property type="molecule type" value="Genomic_DNA"/>
</dbReference>
<dbReference type="RefSeq" id="WP_001291747.1">
    <property type="nucleotide sequence ID" value="NC_006511.1"/>
</dbReference>
<dbReference type="SMR" id="Q5PLN2"/>
<dbReference type="KEGG" id="spt:SPA3506"/>
<dbReference type="HOGENOM" id="CLU_007220_2_2_6"/>
<dbReference type="Proteomes" id="UP000008185">
    <property type="component" value="Chromosome"/>
</dbReference>
<dbReference type="GO" id="GO:0005829">
    <property type="term" value="C:cytosol"/>
    <property type="evidence" value="ECO:0007669"/>
    <property type="project" value="TreeGrafter"/>
</dbReference>
<dbReference type="GO" id="GO:0004814">
    <property type="term" value="F:arginine-tRNA ligase activity"/>
    <property type="evidence" value="ECO:0007669"/>
    <property type="project" value="InterPro"/>
</dbReference>
<dbReference type="GO" id="GO:0005524">
    <property type="term" value="F:ATP binding"/>
    <property type="evidence" value="ECO:0007669"/>
    <property type="project" value="UniProtKB-UniRule"/>
</dbReference>
<dbReference type="GO" id="GO:0004820">
    <property type="term" value="F:glycine-tRNA ligase activity"/>
    <property type="evidence" value="ECO:0007669"/>
    <property type="project" value="UniProtKB-UniRule"/>
</dbReference>
<dbReference type="GO" id="GO:0006420">
    <property type="term" value="P:arginyl-tRNA aminoacylation"/>
    <property type="evidence" value="ECO:0007669"/>
    <property type="project" value="InterPro"/>
</dbReference>
<dbReference type="GO" id="GO:0006426">
    <property type="term" value="P:glycyl-tRNA aminoacylation"/>
    <property type="evidence" value="ECO:0007669"/>
    <property type="project" value="UniProtKB-UniRule"/>
</dbReference>
<dbReference type="HAMAP" id="MF_00255">
    <property type="entry name" value="Gly_tRNA_synth_beta"/>
    <property type="match status" value="1"/>
</dbReference>
<dbReference type="InterPro" id="IPR008909">
    <property type="entry name" value="DALR_anticod-bd"/>
</dbReference>
<dbReference type="InterPro" id="IPR015944">
    <property type="entry name" value="Gly-tRNA-synth_bsu"/>
</dbReference>
<dbReference type="InterPro" id="IPR006194">
    <property type="entry name" value="Gly-tRNA-synth_heterodimer"/>
</dbReference>
<dbReference type="NCBIfam" id="TIGR00211">
    <property type="entry name" value="glyS"/>
    <property type="match status" value="1"/>
</dbReference>
<dbReference type="PANTHER" id="PTHR30075:SF2">
    <property type="entry name" value="GLYCINE--TRNA LIGASE, CHLOROPLASTIC_MITOCHONDRIAL 2"/>
    <property type="match status" value="1"/>
</dbReference>
<dbReference type="PANTHER" id="PTHR30075">
    <property type="entry name" value="GLYCYL-TRNA SYNTHETASE"/>
    <property type="match status" value="1"/>
</dbReference>
<dbReference type="Pfam" id="PF05746">
    <property type="entry name" value="DALR_1"/>
    <property type="match status" value="1"/>
</dbReference>
<dbReference type="Pfam" id="PF02092">
    <property type="entry name" value="tRNA_synt_2f"/>
    <property type="match status" value="1"/>
</dbReference>
<dbReference type="PRINTS" id="PR01045">
    <property type="entry name" value="TRNASYNTHGB"/>
</dbReference>
<dbReference type="SUPFAM" id="SSF109604">
    <property type="entry name" value="HD-domain/PDEase-like"/>
    <property type="match status" value="1"/>
</dbReference>
<dbReference type="PROSITE" id="PS50861">
    <property type="entry name" value="AA_TRNA_LIGASE_II_GLYAB"/>
    <property type="match status" value="1"/>
</dbReference>
<gene>
    <name evidence="1" type="primary">glyS</name>
    <name type="ordered locus">SPA3506</name>
</gene>
<organism>
    <name type="scientific">Salmonella paratyphi A (strain ATCC 9150 / SARB42)</name>
    <dbReference type="NCBI Taxonomy" id="295319"/>
    <lineage>
        <taxon>Bacteria</taxon>
        <taxon>Pseudomonadati</taxon>
        <taxon>Pseudomonadota</taxon>
        <taxon>Gammaproteobacteria</taxon>
        <taxon>Enterobacterales</taxon>
        <taxon>Enterobacteriaceae</taxon>
        <taxon>Salmonella</taxon>
    </lineage>
</organism>
<name>SYGB_SALPA</name>